<evidence type="ECO:0000255" key="1">
    <source>
        <dbReference type="HAMAP-Rule" id="MF_00442"/>
    </source>
</evidence>
<evidence type="ECO:0000256" key="2">
    <source>
        <dbReference type="SAM" id="MobiDB-lite"/>
    </source>
</evidence>
<accession>Q5UYM9</accession>
<proteinExistence type="inferred from homology"/>
<reference key="1">
    <citation type="journal article" date="2004" name="Genome Res.">
        <title>Genome sequence of Haloarcula marismortui: a halophilic archaeon from the Dead Sea.</title>
        <authorList>
            <person name="Baliga N.S."/>
            <person name="Bonneau R."/>
            <person name="Facciotti M.T."/>
            <person name="Pan M."/>
            <person name="Glusman G."/>
            <person name="Deutsch E.W."/>
            <person name="Shannon P."/>
            <person name="Chiu Y."/>
            <person name="Weng R.S."/>
            <person name="Gan R.R."/>
            <person name="Hung P."/>
            <person name="Date S.V."/>
            <person name="Marcotte E."/>
            <person name="Hood L."/>
            <person name="Ng W.V."/>
        </authorList>
    </citation>
    <scope>NUCLEOTIDE SEQUENCE [LARGE SCALE GENOMIC DNA]</scope>
    <source>
        <strain>ATCC 43049 / DSM 3752 / JCM 8966 / VKM B-1809</strain>
    </source>
</reference>
<feature type="chain" id="PRO_0000102104" description="ATP-dependent DNA helicase Hel308">
    <location>
        <begin position="1"/>
        <end position="799"/>
    </location>
</feature>
<feature type="domain" description="Helicase ATP-binding" evidence="1">
    <location>
        <begin position="34"/>
        <end position="200"/>
    </location>
</feature>
<feature type="domain" description="Helicase C-terminal" evidence="1">
    <location>
        <begin position="234"/>
        <end position="435"/>
    </location>
</feature>
<feature type="region of interest" description="Disordered" evidence="2">
    <location>
        <begin position="522"/>
        <end position="566"/>
    </location>
</feature>
<feature type="region of interest" description="Disordered" evidence="2">
    <location>
        <begin position="750"/>
        <end position="799"/>
    </location>
</feature>
<feature type="short sequence motif" description="DEAH box" evidence="1">
    <location>
        <begin position="145"/>
        <end position="148"/>
    </location>
</feature>
<feature type="compositionally biased region" description="Acidic residues" evidence="2">
    <location>
        <begin position="553"/>
        <end position="566"/>
    </location>
</feature>
<feature type="binding site" evidence="1">
    <location>
        <position position="29"/>
    </location>
    <ligand>
        <name>ATP</name>
        <dbReference type="ChEBI" id="CHEBI:30616"/>
    </ligand>
</feature>
<feature type="binding site" evidence="1">
    <location>
        <begin position="47"/>
        <end position="54"/>
    </location>
    <ligand>
        <name>ATP</name>
        <dbReference type="ChEBI" id="CHEBI:30616"/>
    </ligand>
</feature>
<gene>
    <name evidence="1" type="primary">hel308</name>
    <name type="ordered locus">rrnAC2876</name>
</gene>
<protein>
    <recommendedName>
        <fullName evidence="1">ATP-dependent DNA helicase Hel308</fullName>
        <ecNumber evidence="1">5.6.2.4</ecNumber>
    </recommendedName>
    <alternativeName>
        <fullName evidence="1">DNA 3'-5' helicase Hel308</fullName>
    </alternativeName>
</protein>
<dbReference type="EC" id="5.6.2.4" evidence="1"/>
<dbReference type="EMBL" id="AY596297">
    <property type="protein sequence ID" value="AAV47624.1"/>
    <property type="molecule type" value="Genomic_DNA"/>
</dbReference>
<dbReference type="RefSeq" id="WP_011224485.1">
    <property type="nucleotide sequence ID" value="NZ_CP039138.1"/>
</dbReference>
<dbReference type="SMR" id="Q5UYM9"/>
<dbReference type="STRING" id="272569.rrnAC2876"/>
<dbReference type="PaxDb" id="272569-rrnAC2876"/>
<dbReference type="EnsemblBacteria" id="AAV47624">
    <property type="protein sequence ID" value="AAV47624"/>
    <property type="gene ID" value="rrnAC2876"/>
</dbReference>
<dbReference type="KEGG" id="hma:rrnAC2876"/>
<dbReference type="PATRIC" id="fig|272569.17.peg.3445"/>
<dbReference type="eggNOG" id="arCOG00553">
    <property type="taxonomic scope" value="Archaea"/>
</dbReference>
<dbReference type="HOGENOM" id="CLU_006553_3_0_2"/>
<dbReference type="Proteomes" id="UP000001169">
    <property type="component" value="Chromosome I"/>
</dbReference>
<dbReference type="GO" id="GO:0043138">
    <property type="term" value="F:3'-5' DNA helicase activity"/>
    <property type="evidence" value="ECO:0007669"/>
    <property type="project" value="UniProtKB-UniRule"/>
</dbReference>
<dbReference type="GO" id="GO:0005524">
    <property type="term" value="F:ATP binding"/>
    <property type="evidence" value="ECO:0007669"/>
    <property type="project" value="UniProtKB-UniRule"/>
</dbReference>
<dbReference type="GO" id="GO:0016887">
    <property type="term" value="F:ATP hydrolysis activity"/>
    <property type="evidence" value="ECO:0007669"/>
    <property type="project" value="RHEA"/>
</dbReference>
<dbReference type="GO" id="GO:0003677">
    <property type="term" value="F:DNA binding"/>
    <property type="evidence" value="ECO:0007669"/>
    <property type="project" value="UniProtKB-UniRule"/>
</dbReference>
<dbReference type="GO" id="GO:0006281">
    <property type="term" value="P:DNA repair"/>
    <property type="evidence" value="ECO:0007669"/>
    <property type="project" value="UniProtKB-UniRule"/>
</dbReference>
<dbReference type="CDD" id="cd18028">
    <property type="entry name" value="DEXHc_archSki2"/>
    <property type="match status" value="1"/>
</dbReference>
<dbReference type="CDD" id="cd18795">
    <property type="entry name" value="SF2_C_Ski2"/>
    <property type="match status" value="1"/>
</dbReference>
<dbReference type="Gene3D" id="1.10.3380.30">
    <property type="match status" value="2"/>
</dbReference>
<dbReference type="Gene3D" id="1.10.150.20">
    <property type="entry name" value="5' to 3' exonuclease, C-terminal subdomain"/>
    <property type="match status" value="1"/>
</dbReference>
<dbReference type="Gene3D" id="3.40.50.300">
    <property type="entry name" value="P-loop containing nucleotide triphosphate hydrolases"/>
    <property type="match status" value="2"/>
</dbReference>
<dbReference type="HAMAP" id="MF_00442">
    <property type="entry name" value="Helicase_Hel308"/>
    <property type="match status" value="1"/>
</dbReference>
<dbReference type="InterPro" id="IPR011545">
    <property type="entry name" value="DEAD/DEAH_box_helicase_dom"/>
</dbReference>
<dbReference type="InterPro" id="IPR048772">
    <property type="entry name" value="Hel308-like_dom4"/>
</dbReference>
<dbReference type="InterPro" id="IPR050474">
    <property type="entry name" value="Hel308_SKI2-like"/>
</dbReference>
<dbReference type="InterPro" id="IPR014001">
    <property type="entry name" value="Helicase_ATP-bd"/>
</dbReference>
<dbReference type="InterPro" id="IPR001650">
    <property type="entry name" value="Helicase_C-like"/>
</dbReference>
<dbReference type="InterPro" id="IPR022965">
    <property type="entry name" value="Helicase_Hel308"/>
</dbReference>
<dbReference type="InterPro" id="IPR046931">
    <property type="entry name" value="HTH_61"/>
</dbReference>
<dbReference type="InterPro" id="IPR027417">
    <property type="entry name" value="P-loop_NTPase"/>
</dbReference>
<dbReference type="InterPro" id="IPR036390">
    <property type="entry name" value="WH_DNA-bd_sf"/>
</dbReference>
<dbReference type="NCBIfam" id="NF002654">
    <property type="entry name" value="PRK02362.1"/>
    <property type="match status" value="1"/>
</dbReference>
<dbReference type="PANTHER" id="PTHR47961:SF10">
    <property type="entry name" value="ATP-DEPENDENT DNA HELICASE HEL308"/>
    <property type="match status" value="1"/>
</dbReference>
<dbReference type="PANTHER" id="PTHR47961">
    <property type="entry name" value="DNA POLYMERASE THETA, PUTATIVE (AFU_ORTHOLOGUE AFUA_1G05260)-RELATED"/>
    <property type="match status" value="1"/>
</dbReference>
<dbReference type="Pfam" id="PF00270">
    <property type="entry name" value="DEAD"/>
    <property type="match status" value="1"/>
</dbReference>
<dbReference type="Pfam" id="PF00271">
    <property type="entry name" value="Helicase_C"/>
    <property type="match status" value="1"/>
</dbReference>
<dbReference type="Pfam" id="PF21280">
    <property type="entry name" value="Helicase_dom4_arc"/>
    <property type="match status" value="1"/>
</dbReference>
<dbReference type="Pfam" id="PF20470">
    <property type="entry name" value="HTH_61"/>
    <property type="match status" value="1"/>
</dbReference>
<dbReference type="SMART" id="SM00487">
    <property type="entry name" value="DEXDc"/>
    <property type="match status" value="1"/>
</dbReference>
<dbReference type="SMART" id="SM00490">
    <property type="entry name" value="HELICc"/>
    <property type="match status" value="1"/>
</dbReference>
<dbReference type="SUPFAM" id="SSF52540">
    <property type="entry name" value="P-loop containing nucleoside triphosphate hydrolases"/>
    <property type="match status" value="1"/>
</dbReference>
<dbReference type="SUPFAM" id="SSF158702">
    <property type="entry name" value="Sec63 N-terminal domain-like"/>
    <property type="match status" value="1"/>
</dbReference>
<dbReference type="SUPFAM" id="SSF46785">
    <property type="entry name" value="Winged helix' DNA-binding domain"/>
    <property type="match status" value="1"/>
</dbReference>
<dbReference type="PROSITE" id="PS51192">
    <property type="entry name" value="HELICASE_ATP_BIND_1"/>
    <property type="match status" value="1"/>
</dbReference>
<dbReference type="PROSITE" id="PS51194">
    <property type="entry name" value="HELICASE_CTER"/>
    <property type="match status" value="1"/>
</dbReference>
<comment type="function">
    <text evidence="1">DNA-dependent ATPase and 3'-5' DNA helicase that may be involved in repair of stalled replication forks.</text>
</comment>
<comment type="catalytic activity">
    <reaction evidence="1">
        <text>Couples ATP hydrolysis with the unwinding of duplex DNA by translocating in the 3'-5' direction.</text>
        <dbReference type="EC" id="5.6.2.4"/>
    </reaction>
</comment>
<comment type="catalytic activity">
    <reaction evidence="1">
        <text>ATP + H2O = ADP + phosphate + H(+)</text>
        <dbReference type="Rhea" id="RHEA:13065"/>
        <dbReference type="ChEBI" id="CHEBI:15377"/>
        <dbReference type="ChEBI" id="CHEBI:15378"/>
        <dbReference type="ChEBI" id="CHEBI:30616"/>
        <dbReference type="ChEBI" id="CHEBI:43474"/>
        <dbReference type="ChEBI" id="CHEBI:456216"/>
        <dbReference type="EC" id="5.6.2.4"/>
    </reaction>
</comment>
<comment type="subunit">
    <text evidence="1">Monomer.</text>
</comment>
<comment type="similarity">
    <text evidence="1">Belongs to the helicase family. Hel308 subfamily.</text>
</comment>
<sequence length="799" mass="86768">MDVADLPGVPEWLPDHLRDDGIEELYPPQAEAVEAGVTEGENLVASIPTASGKTLIAELAMLSSVARGGKALYIVPLRALASEKQADFEEFEQYGLDIGVSTGNYESEGGWLADKDIVVATSEKVDSLVRNDAPWIEDLTCVVTDEVHLVDDGERGPTLEVTLAKLRRLNPDLQTVALSATIGNAEALATWLDAGLVDSDWRPIDLQKGVHYGQALHLEDGSQQRLSVQNNEKQTAAIVRDTLEDDGSTLVFVNSRRNAEAAAGRLANTVRPHLSTEERDQLADIAEEIRDVSDTETSDDLADAVADGAAFHHAGLSRGHRELVEDAFRDRLVKVVCATPTLAAGVNTPSRRVVVRDWRRYDGSAGGMAPLSVLEVHQMMGRAGRPGLDPYGEAVLIASSHDEVDELFERYVWADPEPVRSKLAAEPALRTHILATVASGFARSRKGLLEFLEQTLYASQTDDSGQLERVVDDVLTYLQRNDFLEIEAGELDATSLGHTVSRLYLDPMSAAEIVDGLRDWERGASDSTSASGSPADAQAEPPANSGFTTASELAEDADESDADRDPDDISALGLYHLVSRTPDMYQLYLRSGDREEYEMELFEREEELLGPTPSEFEEGRFEDWLSALKTARLLEDWATEVDEATITDRYGVGPGDIRGKVETAQWLLGAAESLASEVDLDAARAISEARIRVEHGVREELVDLAGVRGVGRKRARRLFQAGITDRAQLRDADKAVVLAALRGRRKTAENVLENAGHRDPSMEGVEPAPDVSVDLNDGADGDASAESTANDDQASLGDF</sequence>
<organism>
    <name type="scientific">Haloarcula marismortui (strain ATCC 43049 / DSM 3752 / JCM 8966 / VKM B-1809)</name>
    <name type="common">Halobacterium marismortui</name>
    <dbReference type="NCBI Taxonomy" id="272569"/>
    <lineage>
        <taxon>Archaea</taxon>
        <taxon>Methanobacteriati</taxon>
        <taxon>Methanobacteriota</taxon>
        <taxon>Stenosarchaea group</taxon>
        <taxon>Halobacteria</taxon>
        <taxon>Halobacteriales</taxon>
        <taxon>Haloarculaceae</taxon>
        <taxon>Haloarcula</taxon>
    </lineage>
</organism>
<keyword id="KW-0067">ATP-binding</keyword>
<keyword id="KW-0227">DNA damage</keyword>
<keyword id="KW-0234">DNA repair</keyword>
<keyword id="KW-0238">DNA-binding</keyword>
<keyword id="KW-0347">Helicase</keyword>
<keyword id="KW-0378">Hydrolase</keyword>
<keyword id="KW-0413">Isomerase</keyword>
<keyword id="KW-0547">Nucleotide-binding</keyword>
<keyword id="KW-1185">Reference proteome</keyword>
<name>HELS_HALMA</name>